<keyword id="KW-0067">ATP-binding</keyword>
<keyword id="KW-0963">Cytoplasm</keyword>
<keyword id="KW-0436">Ligase</keyword>
<keyword id="KW-0547">Nucleotide-binding</keyword>
<keyword id="KW-0566">Pantothenate biosynthesis</keyword>
<keyword id="KW-1185">Reference proteome</keyword>
<comment type="function">
    <text evidence="1">Catalyzes the condensation of pantoate with beta-alanine in an ATP-dependent reaction via a pantoyl-adenylate intermediate.</text>
</comment>
<comment type="catalytic activity">
    <reaction evidence="1">
        <text>(R)-pantoate + beta-alanine + ATP = (R)-pantothenate + AMP + diphosphate + H(+)</text>
        <dbReference type="Rhea" id="RHEA:10912"/>
        <dbReference type="ChEBI" id="CHEBI:15378"/>
        <dbReference type="ChEBI" id="CHEBI:15980"/>
        <dbReference type="ChEBI" id="CHEBI:29032"/>
        <dbReference type="ChEBI" id="CHEBI:30616"/>
        <dbReference type="ChEBI" id="CHEBI:33019"/>
        <dbReference type="ChEBI" id="CHEBI:57966"/>
        <dbReference type="ChEBI" id="CHEBI:456215"/>
        <dbReference type="EC" id="6.3.2.1"/>
    </reaction>
</comment>
<comment type="pathway">
    <text evidence="1">Cofactor biosynthesis; (R)-pantothenate biosynthesis; (R)-pantothenate from (R)-pantoate and beta-alanine: step 1/1.</text>
</comment>
<comment type="subunit">
    <text evidence="1">Homodimer.</text>
</comment>
<comment type="subcellular location">
    <subcellularLocation>
        <location evidence="1">Cytoplasm</location>
    </subcellularLocation>
</comment>
<comment type="miscellaneous">
    <text evidence="1">The reaction proceeds by a bi uni uni bi ping pong mechanism.</text>
</comment>
<comment type="similarity">
    <text evidence="1">Belongs to the pantothenate synthetase family.</text>
</comment>
<gene>
    <name evidence="1" type="primary">panC</name>
    <name type="ordered locus">MSMEG_6097</name>
    <name type="ordered locus">MSMEI_5938</name>
</gene>
<name>PANC_MYCS2</name>
<feature type="chain" id="PRO_0000305487" description="Pantothenate synthetase">
    <location>
        <begin position="1"/>
        <end position="314"/>
    </location>
</feature>
<feature type="region of interest" description="Disordered" evidence="2">
    <location>
        <begin position="112"/>
        <end position="131"/>
    </location>
</feature>
<feature type="active site" description="Proton donor" evidence="1">
    <location>
        <position position="50"/>
    </location>
</feature>
<feature type="binding site" evidence="1">
    <location>
        <begin position="43"/>
        <end position="50"/>
    </location>
    <ligand>
        <name>ATP</name>
        <dbReference type="ChEBI" id="CHEBI:30616"/>
    </ligand>
</feature>
<feature type="binding site" evidence="1">
    <location>
        <position position="75"/>
    </location>
    <ligand>
        <name>(R)-pantoate</name>
        <dbReference type="ChEBI" id="CHEBI:15980"/>
    </ligand>
</feature>
<feature type="binding site" evidence="1">
    <location>
        <position position="75"/>
    </location>
    <ligand>
        <name>beta-alanine</name>
        <dbReference type="ChEBI" id="CHEBI:57966"/>
    </ligand>
</feature>
<feature type="binding site" evidence="1">
    <location>
        <begin position="161"/>
        <end position="164"/>
    </location>
    <ligand>
        <name>ATP</name>
        <dbReference type="ChEBI" id="CHEBI:30616"/>
    </ligand>
</feature>
<feature type="binding site" evidence="1">
    <location>
        <position position="167"/>
    </location>
    <ligand>
        <name>(R)-pantoate</name>
        <dbReference type="ChEBI" id="CHEBI:15980"/>
    </ligand>
</feature>
<feature type="binding site" evidence="1">
    <location>
        <position position="190"/>
    </location>
    <ligand>
        <name>ATP</name>
        <dbReference type="ChEBI" id="CHEBI:30616"/>
    </ligand>
</feature>
<feature type="binding site" evidence="1">
    <location>
        <begin position="198"/>
        <end position="201"/>
    </location>
    <ligand>
        <name>ATP</name>
        <dbReference type="ChEBI" id="CHEBI:30616"/>
    </ligand>
</feature>
<sequence length="314" mass="33525">MTISRTPKFSAGELNVYSAPADVAAVTRALRTAGRRIVLVPTMGALHEGHLTLVRAAKRTPGAVVVVSIFVNPLQFGPNEDLNAYPRTLEDDLTALRAEGVEIVFTPTGSDMYPDGTRTSVHPGPLGDDLEGSSRPGHFAGVLTVVLKLFSIVRPDRAYFGEKDYQQLTLLRQMVADLNVDVQIVGVPTVRESDGLALSSRNRYLDKDQREQAGALSAALLAGKYAAAGGAEAALDAARAVLDEVPALEVDYLQVRDPMLGPAPAEGQARLLVAARLGRTRLIDNIAIDVGASAGIDGHPRVGNDQNHELPWRN</sequence>
<proteinExistence type="evidence at protein level"/>
<evidence type="ECO:0000255" key="1">
    <source>
        <dbReference type="HAMAP-Rule" id="MF_00158"/>
    </source>
</evidence>
<evidence type="ECO:0000256" key="2">
    <source>
        <dbReference type="SAM" id="MobiDB-lite"/>
    </source>
</evidence>
<reference key="1">
    <citation type="submission" date="2006-10" db="EMBL/GenBank/DDBJ databases">
        <authorList>
            <person name="Fleischmann R.D."/>
            <person name="Dodson R.J."/>
            <person name="Haft D.H."/>
            <person name="Merkel J.S."/>
            <person name="Nelson W.C."/>
            <person name="Fraser C.M."/>
        </authorList>
    </citation>
    <scope>NUCLEOTIDE SEQUENCE [LARGE SCALE GENOMIC DNA]</scope>
    <source>
        <strain>ATCC 700084 / mc(2)155</strain>
    </source>
</reference>
<reference key="2">
    <citation type="journal article" date="2007" name="Genome Biol.">
        <title>Interrupted coding sequences in Mycobacterium smegmatis: authentic mutations or sequencing errors?</title>
        <authorList>
            <person name="Deshayes C."/>
            <person name="Perrodou E."/>
            <person name="Gallien S."/>
            <person name="Euphrasie D."/>
            <person name="Schaeffer C."/>
            <person name="Van-Dorsselaer A."/>
            <person name="Poch O."/>
            <person name="Lecompte O."/>
            <person name="Reyrat J.-M."/>
        </authorList>
    </citation>
    <scope>NUCLEOTIDE SEQUENCE [LARGE SCALE GENOMIC DNA]</scope>
    <source>
        <strain>ATCC 700084 / mc(2)155</strain>
    </source>
</reference>
<reference key="3">
    <citation type="journal article" date="2009" name="Genome Res.">
        <title>Ortho-proteogenomics: multiple proteomes investigation through orthology and a new MS-based protocol.</title>
        <authorList>
            <person name="Gallien S."/>
            <person name="Perrodou E."/>
            <person name="Carapito C."/>
            <person name="Deshayes C."/>
            <person name="Reyrat J.-M."/>
            <person name="Van Dorsselaer A."/>
            <person name="Poch O."/>
            <person name="Schaeffer C."/>
            <person name="Lecompte O."/>
        </authorList>
    </citation>
    <scope>NUCLEOTIDE SEQUENCE [LARGE SCALE GENOMIC DNA]</scope>
    <scope>IDENTIFICATION BY MASS SPECTROMETRY [LARGE SCALE ANALYSIS]</scope>
    <source>
        <strain>ATCC 700084 / mc(2)155</strain>
    </source>
</reference>
<organism>
    <name type="scientific">Mycolicibacterium smegmatis (strain ATCC 700084 / mc(2)155)</name>
    <name type="common">Mycobacterium smegmatis</name>
    <dbReference type="NCBI Taxonomy" id="246196"/>
    <lineage>
        <taxon>Bacteria</taxon>
        <taxon>Bacillati</taxon>
        <taxon>Actinomycetota</taxon>
        <taxon>Actinomycetes</taxon>
        <taxon>Mycobacteriales</taxon>
        <taxon>Mycobacteriaceae</taxon>
        <taxon>Mycolicibacterium</taxon>
    </lineage>
</organism>
<protein>
    <recommendedName>
        <fullName evidence="1">Pantothenate synthetase</fullName>
        <shortName evidence="1">PS</shortName>
        <ecNumber evidence="1">6.3.2.1</ecNumber>
    </recommendedName>
    <alternativeName>
        <fullName evidence="1">Pantoate--beta-alanine ligase</fullName>
    </alternativeName>
    <alternativeName>
        <fullName evidence="1">Pantoate-activating enzyme</fullName>
    </alternativeName>
</protein>
<dbReference type="EC" id="6.3.2.1" evidence="1"/>
<dbReference type="EMBL" id="CP000480">
    <property type="protein sequence ID" value="ABK70073.1"/>
    <property type="molecule type" value="Genomic_DNA"/>
</dbReference>
<dbReference type="EMBL" id="CP001663">
    <property type="protein sequence ID" value="AFP42371.1"/>
    <property type="molecule type" value="Genomic_DNA"/>
</dbReference>
<dbReference type="RefSeq" id="WP_011731036.1">
    <property type="nucleotide sequence ID" value="NZ_SIJM01000046.1"/>
</dbReference>
<dbReference type="RefSeq" id="YP_890318.1">
    <property type="nucleotide sequence ID" value="NC_008596.1"/>
</dbReference>
<dbReference type="SMR" id="A0R580"/>
<dbReference type="STRING" id="246196.MSMEG_6097"/>
<dbReference type="PaxDb" id="246196-MSMEI_5938"/>
<dbReference type="GeneID" id="93460729"/>
<dbReference type="KEGG" id="msb:LJ00_30150"/>
<dbReference type="KEGG" id="msg:MSMEI_5938"/>
<dbReference type="KEGG" id="msm:MSMEG_6097"/>
<dbReference type="PATRIC" id="fig|246196.19.peg.5936"/>
<dbReference type="eggNOG" id="COG0414">
    <property type="taxonomic scope" value="Bacteria"/>
</dbReference>
<dbReference type="OrthoDB" id="9773087at2"/>
<dbReference type="UniPathway" id="UPA00028">
    <property type="reaction ID" value="UER00005"/>
</dbReference>
<dbReference type="Proteomes" id="UP000000757">
    <property type="component" value="Chromosome"/>
</dbReference>
<dbReference type="Proteomes" id="UP000006158">
    <property type="component" value="Chromosome"/>
</dbReference>
<dbReference type="GO" id="GO:0005829">
    <property type="term" value="C:cytosol"/>
    <property type="evidence" value="ECO:0007669"/>
    <property type="project" value="TreeGrafter"/>
</dbReference>
<dbReference type="GO" id="GO:0005524">
    <property type="term" value="F:ATP binding"/>
    <property type="evidence" value="ECO:0007669"/>
    <property type="project" value="UniProtKB-KW"/>
</dbReference>
<dbReference type="GO" id="GO:0004592">
    <property type="term" value="F:pantoate-beta-alanine ligase activity"/>
    <property type="evidence" value="ECO:0007669"/>
    <property type="project" value="UniProtKB-UniRule"/>
</dbReference>
<dbReference type="GO" id="GO:0015940">
    <property type="term" value="P:pantothenate biosynthetic process"/>
    <property type="evidence" value="ECO:0007669"/>
    <property type="project" value="UniProtKB-UniRule"/>
</dbReference>
<dbReference type="CDD" id="cd00560">
    <property type="entry name" value="PanC"/>
    <property type="match status" value="1"/>
</dbReference>
<dbReference type="FunFam" id="3.40.50.620:FF:000114">
    <property type="entry name" value="Pantothenate synthetase"/>
    <property type="match status" value="1"/>
</dbReference>
<dbReference type="Gene3D" id="3.40.50.620">
    <property type="entry name" value="HUPs"/>
    <property type="match status" value="1"/>
</dbReference>
<dbReference type="Gene3D" id="3.30.1300.10">
    <property type="entry name" value="Pantoate-beta-alanine ligase, C-terminal domain"/>
    <property type="match status" value="1"/>
</dbReference>
<dbReference type="HAMAP" id="MF_00158">
    <property type="entry name" value="PanC"/>
    <property type="match status" value="1"/>
</dbReference>
<dbReference type="InterPro" id="IPR003721">
    <property type="entry name" value="Pantoate_ligase"/>
</dbReference>
<dbReference type="InterPro" id="IPR042176">
    <property type="entry name" value="Pantoate_ligase_C"/>
</dbReference>
<dbReference type="InterPro" id="IPR014729">
    <property type="entry name" value="Rossmann-like_a/b/a_fold"/>
</dbReference>
<dbReference type="NCBIfam" id="TIGR00018">
    <property type="entry name" value="panC"/>
    <property type="match status" value="1"/>
</dbReference>
<dbReference type="PANTHER" id="PTHR21299">
    <property type="entry name" value="CYTIDYLATE KINASE/PANTOATE-BETA-ALANINE LIGASE"/>
    <property type="match status" value="1"/>
</dbReference>
<dbReference type="PANTHER" id="PTHR21299:SF1">
    <property type="entry name" value="PANTOATE--BETA-ALANINE LIGASE"/>
    <property type="match status" value="1"/>
</dbReference>
<dbReference type="Pfam" id="PF02569">
    <property type="entry name" value="Pantoate_ligase"/>
    <property type="match status" value="1"/>
</dbReference>
<dbReference type="SUPFAM" id="SSF52374">
    <property type="entry name" value="Nucleotidylyl transferase"/>
    <property type="match status" value="1"/>
</dbReference>
<accession>A0R580</accession>
<accession>I7GFF1</accession>